<proteinExistence type="predicted"/>
<reference key="1">
    <citation type="journal article" date="1990" name="J. Bacteriol.">
        <title>Partitioning of broad-host-range plasmid RP4 is a complex system involving site-specific recombination.</title>
        <authorList>
            <person name="Gerlitz M."/>
            <person name="Hrabak O."/>
            <person name="Schwab H."/>
        </authorList>
    </citation>
    <scope>NUCLEOTIDE SEQUENCE [GENOMIC DNA]</scope>
</reference>
<reference key="2">
    <citation type="journal article" date="1993" name="J. Mol. Biol.">
        <title>Tn5053, a mercury resistance transposon with integron's ends.</title>
        <authorList>
            <person name="Kholodii G.Y."/>
            <person name="Yurieva O.V."/>
            <person name="Lomovskaya O.L."/>
            <person name="Gorlenko Z.M."/>
            <person name="Mindlin S.Z."/>
            <person name="Nikiforov V.G."/>
        </authorList>
    </citation>
    <scope>NUCLEOTIDE SEQUENCE [GENOMIC DNA]</scope>
</reference>
<accession>P22993</accession>
<gene>
    <name type="primary">parC</name>
</gene>
<organism>
    <name type="scientific">Escherichia coli</name>
    <dbReference type="NCBI Taxonomy" id="562"/>
    <lineage>
        <taxon>Bacteria</taxon>
        <taxon>Pseudomonadati</taxon>
        <taxon>Pseudomonadota</taxon>
        <taxon>Gammaproteobacteria</taxon>
        <taxon>Enterobacterales</taxon>
        <taxon>Enterobacteriaceae</taxon>
        <taxon>Escherichia</taxon>
    </lineage>
</organism>
<keyword id="KW-0614">Plasmid</keyword>
<feature type="chain" id="PRO_0000068410" description="Protein ParC">
    <location>
        <begin position="1"/>
        <end position="97"/>
    </location>
</feature>
<geneLocation type="plasmid">
    <name>IncP-alpha RP4</name>
</geneLocation>
<sequence>MGIPNLTKGDAMRAAKHYRQLLSIDFNIEALAFVPGPDGTRGRRIHVLGREVRDRPGLVEYLSPAFGSRVALDGYCKANFDAVLHLAYPDHQQWGHA</sequence>
<protein>
    <recommendedName>
        <fullName>Protein ParC</fullName>
    </recommendedName>
</protein>
<dbReference type="EMBL" id="L40585">
    <property type="protein sequence ID" value="AAA98321.1"/>
    <property type="molecule type" value="Genomic_DNA"/>
</dbReference>
<dbReference type="EMBL" id="M59825">
    <property type="protein sequence ID" value="AAA26417.1"/>
    <property type="molecule type" value="Genomic_DNA"/>
</dbReference>
<dbReference type="EMBL" id="L03728">
    <property type="protein sequence ID" value="AAA91497.1"/>
    <property type="molecule type" value="Genomic_DNA"/>
</dbReference>
<dbReference type="PIR" id="B37141">
    <property type="entry name" value="B37141"/>
</dbReference>
<dbReference type="PIR" id="S32829">
    <property type="entry name" value="S32829"/>
</dbReference>
<name>PARC4_ECOLX</name>